<name>NDX2_CAEEL</name>
<feature type="chain" id="PRO_0000057134" description="Putative nudix hydrolase 2">
    <location>
        <begin position="1"/>
        <end position="223"/>
    </location>
</feature>
<feature type="domain" description="Nudix hydrolase" evidence="2">
    <location>
        <begin position="72"/>
        <end position="213"/>
    </location>
</feature>
<feature type="short sequence motif" description="Nudix box">
    <location>
        <begin position="111"/>
        <end position="132"/>
    </location>
</feature>
<feature type="binding site" evidence="1">
    <location>
        <position position="126"/>
    </location>
    <ligand>
        <name>Mg(2+)</name>
        <dbReference type="ChEBI" id="CHEBI:18420"/>
    </ligand>
</feature>
<feature type="binding site" evidence="1">
    <location>
        <position position="130"/>
    </location>
    <ligand>
        <name>Mg(2+)</name>
        <dbReference type="ChEBI" id="CHEBI:18420"/>
    </ligand>
</feature>
<sequence>MTSSATSPTNGVDKNKNEEMVATPANCPYQLFNQEVVWNGKWIQTRQVGFKTHTGQVGVWQSVHRNTKPVEASADGVSIIARVRKQGKLYIVLVKQYRIPCGKLCLELPAGLIDAGETAQQAAIRELKEETGYVSGKVVMESKLCFLDPGLTDDSQCLVVVDVDGDAPENQNPVQVLDSTESIEVLLVEQSALMAYVTNLDSSSIVVESTLLAYAMGIQFATI</sequence>
<comment type="function">
    <text evidence="1">Probably mediates the hydrolysis of some nucleoside diphosphate derivatives.</text>
</comment>
<comment type="cofactor">
    <cofactor evidence="1">
        <name>Mg(2+)</name>
        <dbReference type="ChEBI" id="CHEBI:18420"/>
    </cofactor>
    <cofactor evidence="1">
        <name>Mn(2+)</name>
        <dbReference type="ChEBI" id="CHEBI:29035"/>
    </cofactor>
</comment>
<comment type="similarity">
    <text evidence="3">Belongs to the Nudix hydrolase family.</text>
</comment>
<protein>
    <recommendedName>
        <fullName>Putative nudix hydrolase 2</fullName>
        <ecNumber>3.6.1.-</ecNumber>
    </recommendedName>
</protein>
<gene>
    <name type="primary">ndx-2</name>
    <name type="ORF">W02G9.1</name>
</gene>
<evidence type="ECO:0000250" key="1"/>
<evidence type="ECO:0000255" key="2">
    <source>
        <dbReference type="PROSITE-ProRule" id="PRU00794"/>
    </source>
</evidence>
<evidence type="ECO:0000305" key="3"/>
<accession>O61902</accession>
<dbReference type="EC" id="3.6.1.-"/>
<dbReference type="EMBL" id="FO081762">
    <property type="protein sequence ID" value="CCD74269.1"/>
    <property type="molecule type" value="Genomic_DNA"/>
</dbReference>
<dbReference type="PIR" id="T33225">
    <property type="entry name" value="T33225"/>
</dbReference>
<dbReference type="RefSeq" id="NP_503726.1">
    <property type="nucleotide sequence ID" value="NM_071325.6"/>
</dbReference>
<dbReference type="SMR" id="O61902"/>
<dbReference type="BioGRID" id="53776">
    <property type="interactions" value="2"/>
</dbReference>
<dbReference type="FunCoup" id="O61902">
    <property type="interactions" value="1910"/>
</dbReference>
<dbReference type="STRING" id="6239.W02G9.1.1"/>
<dbReference type="PaxDb" id="6239-W02G9.1"/>
<dbReference type="PeptideAtlas" id="O61902"/>
<dbReference type="EnsemblMetazoa" id="W02G9.1.1">
    <property type="protein sequence ID" value="W02G9.1.1"/>
    <property type="gene ID" value="WBGene00003579"/>
</dbReference>
<dbReference type="GeneID" id="189126"/>
<dbReference type="KEGG" id="cel:CELE_W02G9.1"/>
<dbReference type="UCSC" id="W02G9.1">
    <property type="organism name" value="c. elegans"/>
</dbReference>
<dbReference type="AGR" id="WB:WBGene00003579"/>
<dbReference type="CTD" id="189126"/>
<dbReference type="WormBase" id="W02G9.1">
    <property type="protein sequence ID" value="CE18314"/>
    <property type="gene ID" value="WBGene00003579"/>
    <property type="gene designation" value="ndx-2"/>
</dbReference>
<dbReference type="eggNOG" id="KOG3041">
    <property type="taxonomic scope" value="Eukaryota"/>
</dbReference>
<dbReference type="GeneTree" id="ENSGT00940000154045"/>
<dbReference type="HOGENOM" id="CLU_062658_0_2_1"/>
<dbReference type="InParanoid" id="O61902"/>
<dbReference type="OMA" id="NDPGLCN"/>
<dbReference type="OrthoDB" id="10249920at2759"/>
<dbReference type="PhylomeDB" id="O61902"/>
<dbReference type="Reactome" id="R-CEL-2393930">
    <property type="pathway name" value="Phosphate bond hydrolysis by NUDT proteins"/>
</dbReference>
<dbReference type="PRO" id="PR:O61902"/>
<dbReference type="Proteomes" id="UP000001940">
    <property type="component" value="Chromosome V"/>
</dbReference>
<dbReference type="Bgee" id="WBGene00003579">
    <property type="expression patterns" value="Expressed in adult organism and 3 other cell types or tissues"/>
</dbReference>
<dbReference type="GO" id="GO:0005634">
    <property type="term" value="C:nucleus"/>
    <property type="evidence" value="ECO:0000318"/>
    <property type="project" value="GO_Central"/>
</dbReference>
<dbReference type="GO" id="GO:0047631">
    <property type="term" value="F:ADP-ribose diphosphatase activity"/>
    <property type="evidence" value="ECO:0000318"/>
    <property type="project" value="GO_Central"/>
</dbReference>
<dbReference type="GO" id="GO:0046872">
    <property type="term" value="F:metal ion binding"/>
    <property type="evidence" value="ECO:0007669"/>
    <property type="project" value="UniProtKB-KW"/>
</dbReference>
<dbReference type="GO" id="GO:0006753">
    <property type="term" value="P:nucleoside phosphate metabolic process"/>
    <property type="evidence" value="ECO:0000318"/>
    <property type="project" value="GO_Central"/>
</dbReference>
<dbReference type="GO" id="GO:0019693">
    <property type="term" value="P:ribose phosphate metabolic process"/>
    <property type="evidence" value="ECO:0000318"/>
    <property type="project" value="GO_Central"/>
</dbReference>
<dbReference type="CDD" id="cd18888">
    <property type="entry name" value="NUDIX_ADPRase_Nudt5"/>
    <property type="match status" value="1"/>
</dbReference>
<dbReference type="FunFam" id="3.90.79.10:FF:000139">
    <property type="entry name" value="Putative nudix hydrolase 2"/>
    <property type="match status" value="1"/>
</dbReference>
<dbReference type="Gene3D" id="3.90.79.10">
    <property type="entry name" value="Nucleoside Triphosphate Pyrophosphohydrolase"/>
    <property type="match status" value="1"/>
</dbReference>
<dbReference type="InterPro" id="IPR020476">
    <property type="entry name" value="Nudix_hydrolase"/>
</dbReference>
<dbReference type="InterPro" id="IPR015797">
    <property type="entry name" value="NUDIX_hydrolase-like_dom_sf"/>
</dbReference>
<dbReference type="InterPro" id="IPR020084">
    <property type="entry name" value="NUDIX_hydrolase_CS"/>
</dbReference>
<dbReference type="InterPro" id="IPR000086">
    <property type="entry name" value="NUDIX_hydrolase_dom"/>
</dbReference>
<dbReference type="PANTHER" id="PTHR11839:SF1">
    <property type="entry name" value="ADP-SUGAR PYROPHOSPHATASE"/>
    <property type="match status" value="1"/>
</dbReference>
<dbReference type="PANTHER" id="PTHR11839">
    <property type="entry name" value="UDP/ADP-SUGAR PYROPHOSPHATASE"/>
    <property type="match status" value="1"/>
</dbReference>
<dbReference type="Pfam" id="PF00293">
    <property type="entry name" value="NUDIX"/>
    <property type="match status" value="1"/>
</dbReference>
<dbReference type="PRINTS" id="PR00502">
    <property type="entry name" value="NUDIXFAMILY"/>
</dbReference>
<dbReference type="SUPFAM" id="SSF55811">
    <property type="entry name" value="Nudix"/>
    <property type="match status" value="1"/>
</dbReference>
<dbReference type="PROSITE" id="PS51462">
    <property type="entry name" value="NUDIX"/>
    <property type="match status" value="1"/>
</dbReference>
<dbReference type="PROSITE" id="PS00893">
    <property type="entry name" value="NUDIX_BOX"/>
    <property type="match status" value="1"/>
</dbReference>
<organism>
    <name type="scientific">Caenorhabditis elegans</name>
    <dbReference type="NCBI Taxonomy" id="6239"/>
    <lineage>
        <taxon>Eukaryota</taxon>
        <taxon>Metazoa</taxon>
        <taxon>Ecdysozoa</taxon>
        <taxon>Nematoda</taxon>
        <taxon>Chromadorea</taxon>
        <taxon>Rhabditida</taxon>
        <taxon>Rhabditina</taxon>
        <taxon>Rhabditomorpha</taxon>
        <taxon>Rhabditoidea</taxon>
        <taxon>Rhabditidae</taxon>
        <taxon>Peloderinae</taxon>
        <taxon>Caenorhabditis</taxon>
    </lineage>
</organism>
<keyword id="KW-0378">Hydrolase</keyword>
<keyword id="KW-0460">Magnesium</keyword>
<keyword id="KW-0464">Manganese</keyword>
<keyword id="KW-0479">Metal-binding</keyword>
<keyword id="KW-1185">Reference proteome</keyword>
<reference key="1">
    <citation type="journal article" date="1998" name="Science">
        <title>Genome sequence of the nematode C. elegans: a platform for investigating biology.</title>
        <authorList>
            <consortium name="The C. elegans sequencing consortium"/>
        </authorList>
    </citation>
    <scope>NUCLEOTIDE SEQUENCE [LARGE SCALE GENOMIC DNA]</scope>
    <source>
        <strain>Bristol N2</strain>
    </source>
</reference>
<proteinExistence type="inferred from homology"/>